<accession>Q8PYQ9</accession>
<name>PURA_METMA</name>
<proteinExistence type="inferred from homology"/>
<organism>
    <name type="scientific">Methanosarcina mazei (strain ATCC BAA-159 / DSM 3647 / Goe1 / Go1 / JCM 11833 / OCM 88)</name>
    <name type="common">Methanosarcina frisia</name>
    <dbReference type="NCBI Taxonomy" id="192952"/>
    <lineage>
        <taxon>Archaea</taxon>
        <taxon>Methanobacteriati</taxon>
        <taxon>Methanobacteriota</taxon>
        <taxon>Stenosarchaea group</taxon>
        <taxon>Methanomicrobia</taxon>
        <taxon>Methanosarcinales</taxon>
        <taxon>Methanosarcinaceae</taxon>
        <taxon>Methanosarcina</taxon>
    </lineage>
</organism>
<comment type="function">
    <text evidence="1">Plays an important role in the de novo pathway of purine nucleotide biosynthesis. Catalyzes the first committed step in the biosynthesis of AMP from IMP.</text>
</comment>
<comment type="catalytic activity">
    <reaction evidence="1">
        <text>IMP + L-aspartate + GTP = N(6)-(1,2-dicarboxyethyl)-AMP + GDP + phosphate + 2 H(+)</text>
        <dbReference type="Rhea" id="RHEA:15753"/>
        <dbReference type="ChEBI" id="CHEBI:15378"/>
        <dbReference type="ChEBI" id="CHEBI:29991"/>
        <dbReference type="ChEBI" id="CHEBI:37565"/>
        <dbReference type="ChEBI" id="CHEBI:43474"/>
        <dbReference type="ChEBI" id="CHEBI:57567"/>
        <dbReference type="ChEBI" id="CHEBI:58053"/>
        <dbReference type="ChEBI" id="CHEBI:58189"/>
        <dbReference type="EC" id="6.3.4.4"/>
    </reaction>
</comment>
<comment type="cofactor">
    <cofactor evidence="1">
        <name>Mg(2+)</name>
        <dbReference type="ChEBI" id="CHEBI:18420"/>
    </cofactor>
    <text evidence="1">Binds 1 Mg(2+) ion per subunit.</text>
</comment>
<comment type="pathway">
    <text evidence="1">Purine metabolism; AMP biosynthesis via de novo pathway; AMP from IMP: step 1/2.</text>
</comment>
<comment type="subunit">
    <text evidence="1">Homodimer.</text>
</comment>
<comment type="subcellular location">
    <subcellularLocation>
        <location evidence="1">Cytoplasm</location>
    </subcellularLocation>
</comment>
<comment type="similarity">
    <text evidence="1">Belongs to the adenylosuccinate synthetase family.</text>
</comment>
<dbReference type="EC" id="6.3.4.4" evidence="1"/>
<dbReference type="EMBL" id="AE008384">
    <property type="protein sequence ID" value="AAM30497.1"/>
    <property type="molecule type" value="Genomic_DNA"/>
</dbReference>
<dbReference type="SMR" id="Q8PYQ9"/>
<dbReference type="KEGG" id="mma:MM_0801"/>
<dbReference type="PATRIC" id="fig|192952.21.peg.948"/>
<dbReference type="eggNOG" id="arCOG04387">
    <property type="taxonomic scope" value="Archaea"/>
</dbReference>
<dbReference type="HOGENOM" id="CLU_029848_0_0_2"/>
<dbReference type="UniPathway" id="UPA00075">
    <property type="reaction ID" value="UER00335"/>
</dbReference>
<dbReference type="Proteomes" id="UP000000595">
    <property type="component" value="Chromosome"/>
</dbReference>
<dbReference type="GO" id="GO:0005737">
    <property type="term" value="C:cytoplasm"/>
    <property type="evidence" value="ECO:0007669"/>
    <property type="project" value="UniProtKB-SubCell"/>
</dbReference>
<dbReference type="GO" id="GO:0004019">
    <property type="term" value="F:adenylosuccinate synthase activity"/>
    <property type="evidence" value="ECO:0007669"/>
    <property type="project" value="UniProtKB-UniRule"/>
</dbReference>
<dbReference type="GO" id="GO:0005525">
    <property type="term" value="F:GTP binding"/>
    <property type="evidence" value="ECO:0007669"/>
    <property type="project" value="UniProtKB-UniRule"/>
</dbReference>
<dbReference type="GO" id="GO:0000287">
    <property type="term" value="F:magnesium ion binding"/>
    <property type="evidence" value="ECO:0007669"/>
    <property type="project" value="UniProtKB-UniRule"/>
</dbReference>
<dbReference type="GO" id="GO:0044208">
    <property type="term" value="P:'de novo' AMP biosynthetic process"/>
    <property type="evidence" value="ECO:0007669"/>
    <property type="project" value="UniProtKB-UniRule"/>
</dbReference>
<dbReference type="GO" id="GO:0046040">
    <property type="term" value="P:IMP metabolic process"/>
    <property type="evidence" value="ECO:0007669"/>
    <property type="project" value="TreeGrafter"/>
</dbReference>
<dbReference type="CDD" id="cd03108">
    <property type="entry name" value="AdSS"/>
    <property type="match status" value="1"/>
</dbReference>
<dbReference type="FunFam" id="1.10.300.10:FF:000001">
    <property type="entry name" value="Adenylosuccinate synthetase"/>
    <property type="match status" value="1"/>
</dbReference>
<dbReference type="Gene3D" id="3.40.440.10">
    <property type="entry name" value="Adenylosuccinate Synthetase, subunit A, domain 1"/>
    <property type="match status" value="1"/>
</dbReference>
<dbReference type="Gene3D" id="1.10.300.10">
    <property type="entry name" value="Adenylosuccinate Synthetase, subunit A, domain 2"/>
    <property type="match status" value="1"/>
</dbReference>
<dbReference type="Gene3D" id="3.90.170.10">
    <property type="entry name" value="Adenylosuccinate Synthetase, subunit A, domain 3"/>
    <property type="match status" value="1"/>
</dbReference>
<dbReference type="HAMAP" id="MF_00011">
    <property type="entry name" value="Adenylosucc_synth"/>
    <property type="match status" value="1"/>
</dbReference>
<dbReference type="InterPro" id="IPR018220">
    <property type="entry name" value="Adenylosuccin_syn_GTP-bd"/>
</dbReference>
<dbReference type="InterPro" id="IPR042109">
    <property type="entry name" value="Adenylosuccinate_synth_dom1"/>
</dbReference>
<dbReference type="InterPro" id="IPR042110">
    <property type="entry name" value="Adenylosuccinate_synth_dom2"/>
</dbReference>
<dbReference type="InterPro" id="IPR042111">
    <property type="entry name" value="Adenylosuccinate_synth_dom3"/>
</dbReference>
<dbReference type="InterPro" id="IPR001114">
    <property type="entry name" value="Adenylosuccinate_synthetase"/>
</dbReference>
<dbReference type="InterPro" id="IPR027417">
    <property type="entry name" value="P-loop_NTPase"/>
</dbReference>
<dbReference type="NCBIfam" id="NF002223">
    <property type="entry name" value="PRK01117.1"/>
    <property type="match status" value="1"/>
</dbReference>
<dbReference type="NCBIfam" id="TIGR00184">
    <property type="entry name" value="purA"/>
    <property type="match status" value="1"/>
</dbReference>
<dbReference type="PANTHER" id="PTHR11846">
    <property type="entry name" value="ADENYLOSUCCINATE SYNTHETASE"/>
    <property type="match status" value="1"/>
</dbReference>
<dbReference type="PANTHER" id="PTHR11846:SF0">
    <property type="entry name" value="ADENYLOSUCCINATE SYNTHETASE"/>
    <property type="match status" value="1"/>
</dbReference>
<dbReference type="Pfam" id="PF00709">
    <property type="entry name" value="Adenylsucc_synt"/>
    <property type="match status" value="1"/>
</dbReference>
<dbReference type="SMART" id="SM00788">
    <property type="entry name" value="Adenylsucc_synt"/>
    <property type="match status" value="1"/>
</dbReference>
<dbReference type="SUPFAM" id="SSF52540">
    <property type="entry name" value="P-loop containing nucleoside triphosphate hydrolases"/>
    <property type="match status" value="1"/>
</dbReference>
<dbReference type="PROSITE" id="PS01266">
    <property type="entry name" value="ADENYLOSUCCIN_SYN_1"/>
    <property type="match status" value="1"/>
</dbReference>
<feature type="chain" id="PRO_0000224341" description="Adenylosuccinate synthetase">
    <location>
        <begin position="1"/>
        <end position="379"/>
    </location>
</feature>
<feature type="active site" description="Proton acceptor" evidence="1">
    <location>
        <position position="12"/>
    </location>
</feature>
<feature type="active site" description="Proton donor" evidence="1">
    <location>
        <position position="40"/>
    </location>
</feature>
<feature type="binding site" evidence="1">
    <location>
        <begin position="11"/>
        <end position="17"/>
    </location>
    <ligand>
        <name>GTP</name>
        <dbReference type="ChEBI" id="CHEBI:37565"/>
    </ligand>
</feature>
<feature type="binding site" description="in other chain" evidence="1">
    <location>
        <begin position="12"/>
        <end position="15"/>
    </location>
    <ligand>
        <name>IMP</name>
        <dbReference type="ChEBI" id="CHEBI:58053"/>
        <note>ligand shared between dimeric partners</note>
    </ligand>
</feature>
<feature type="binding site" evidence="1">
    <location>
        <position position="12"/>
    </location>
    <ligand>
        <name>Mg(2+)</name>
        <dbReference type="ChEBI" id="CHEBI:18420"/>
    </ligand>
</feature>
<feature type="binding site" description="in other chain" evidence="1">
    <location>
        <begin position="37"/>
        <end position="40"/>
    </location>
    <ligand>
        <name>IMP</name>
        <dbReference type="ChEBI" id="CHEBI:58053"/>
        <note>ligand shared between dimeric partners</note>
    </ligand>
</feature>
<feature type="binding site" evidence="1">
    <location>
        <begin position="39"/>
        <end position="41"/>
    </location>
    <ligand>
        <name>GTP</name>
        <dbReference type="ChEBI" id="CHEBI:37565"/>
    </ligand>
</feature>
<feature type="binding site" evidence="1">
    <location>
        <position position="39"/>
    </location>
    <ligand>
        <name>Mg(2+)</name>
        <dbReference type="ChEBI" id="CHEBI:18420"/>
    </ligand>
</feature>
<feature type="binding site" description="in other chain" evidence="1">
    <location>
        <position position="127"/>
    </location>
    <ligand>
        <name>IMP</name>
        <dbReference type="ChEBI" id="CHEBI:58053"/>
        <note>ligand shared between dimeric partners</note>
    </ligand>
</feature>
<feature type="binding site" evidence="1">
    <location>
        <position position="141"/>
    </location>
    <ligand>
        <name>IMP</name>
        <dbReference type="ChEBI" id="CHEBI:58053"/>
        <note>ligand shared between dimeric partners</note>
    </ligand>
</feature>
<feature type="binding site" description="in other chain" evidence="1">
    <location>
        <position position="223"/>
    </location>
    <ligand>
        <name>IMP</name>
        <dbReference type="ChEBI" id="CHEBI:58053"/>
        <note>ligand shared between dimeric partners</note>
    </ligand>
</feature>
<feature type="binding site" description="in other chain" evidence="1">
    <location>
        <position position="238"/>
    </location>
    <ligand>
        <name>IMP</name>
        <dbReference type="ChEBI" id="CHEBI:58053"/>
        <note>ligand shared between dimeric partners</note>
    </ligand>
</feature>
<feature type="binding site" evidence="1">
    <location>
        <begin position="298"/>
        <end position="304"/>
    </location>
    <ligand>
        <name>substrate</name>
    </ligand>
</feature>
<feature type="binding site" description="in other chain" evidence="1">
    <location>
        <position position="302"/>
    </location>
    <ligand>
        <name>IMP</name>
        <dbReference type="ChEBI" id="CHEBI:58053"/>
        <note>ligand shared between dimeric partners</note>
    </ligand>
</feature>
<feature type="binding site" evidence="1">
    <location>
        <position position="304"/>
    </location>
    <ligand>
        <name>GTP</name>
        <dbReference type="ChEBI" id="CHEBI:37565"/>
    </ligand>
</feature>
<feature type="binding site" evidence="1">
    <location>
        <begin position="330"/>
        <end position="332"/>
    </location>
    <ligand>
        <name>GTP</name>
        <dbReference type="ChEBI" id="CHEBI:37565"/>
    </ligand>
</feature>
<evidence type="ECO:0000255" key="1">
    <source>
        <dbReference type="HAMAP-Rule" id="MF_00011"/>
    </source>
</evidence>
<reference key="1">
    <citation type="journal article" date="2002" name="J. Mol. Microbiol. Biotechnol.">
        <title>The genome of Methanosarcina mazei: evidence for lateral gene transfer between Bacteria and Archaea.</title>
        <authorList>
            <person name="Deppenmeier U."/>
            <person name="Johann A."/>
            <person name="Hartsch T."/>
            <person name="Merkl R."/>
            <person name="Schmitz R.A."/>
            <person name="Martinez-Arias R."/>
            <person name="Henne A."/>
            <person name="Wiezer A."/>
            <person name="Baeumer S."/>
            <person name="Jacobi C."/>
            <person name="Brueggemann H."/>
            <person name="Lienard T."/>
            <person name="Christmann A."/>
            <person name="Boemecke M."/>
            <person name="Steckel S."/>
            <person name="Bhattacharyya A."/>
            <person name="Lykidis A."/>
            <person name="Overbeek R."/>
            <person name="Klenk H.-P."/>
            <person name="Gunsalus R.P."/>
            <person name="Fritz H.-J."/>
            <person name="Gottschalk G."/>
        </authorList>
    </citation>
    <scope>NUCLEOTIDE SEQUENCE [LARGE SCALE GENOMIC DNA]</scope>
    <source>
        <strain>ATCC BAA-159 / DSM 3647 / Goe1 / Go1 / JCM 11833 / OCM 88</strain>
    </source>
</reference>
<gene>
    <name evidence="1" type="primary">purA</name>
    <name type="ordered locus">MM_0801</name>
</gene>
<sequence length="379" mass="41453">MFTIITGAQFGDEGKGKIVDLLAKDYDVVARFQGGNNAGHTVKVGDEVYKLHLIPSGILLDARVLIGPGVVLNPEVLAEEIEMFEKHGVKVNSEKLGVDAKTSIIMPYHIELDGLREASRETKIGTTKRGIGYAYIDKVARDEIRMAELVDKERFLARLEELAPQKEKEIEAMGGDPRIVRDPELIKRYLELGEQFAAYITDVSREINQALDEGKNVMAEAAQGTHLDVIHGTQKFVTSSSTIAGSACANLGVGPTRVDNVIAIVKAYITRVGEGPLPTELIGELGERIQKAGGEFGTTTGRGRRCGWFDLPLLKKAIALNGYTEISLTKLDVLTGLDPLRSAQVMSIKGKNWTILRNLRKTSRHAALCMKTCQDGKKN</sequence>
<keyword id="KW-0963">Cytoplasm</keyword>
<keyword id="KW-0342">GTP-binding</keyword>
<keyword id="KW-0436">Ligase</keyword>
<keyword id="KW-0460">Magnesium</keyword>
<keyword id="KW-0479">Metal-binding</keyword>
<keyword id="KW-0547">Nucleotide-binding</keyword>
<keyword id="KW-0658">Purine biosynthesis</keyword>
<protein>
    <recommendedName>
        <fullName evidence="1">Adenylosuccinate synthetase</fullName>
        <shortName evidence="1">AMPSase</shortName>
        <shortName evidence="1">AdSS</shortName>
        <ecNumber evidence="1">6.3.4.4</ecNumber>
    </recommendedName>
    <alternativeName>
        <fullName evidence="1">IMP--aspartate ligase</fullName>
    </alternativeName>
</protein>